<comment type="function">
    <text evidence="1 4 5">E3 ubiquitin-protein ligase that mediates ubiquitination and subsequent proteasomal degradation of myosin regulatory light chain (MRLC) (By similarity). Regulates cell movements during gastrulation by acting downstream of fz7 to antagonize the frizzled-signaling pathway.</text>
</comment>
<comment type="catalytic activity">
    <reaction>
        <text>S-ubiquitinyl-[E2 ubiquitin-conjugating enzyme]-L-cysteine + [acceptor protein]-L-lysine = [E2 ubiquitin-conjugating enzyme]-L-cysteine + N(6)-ubiquitinyl-[acceptor protein]-L-lysine.</text>
        <dbReference type="EC" id="2.3.2.27"/>
    </reaction>
</comment>
<comment type="pathway">
    <text>Protein modification; protein ubiquitination.</text>
</comment>
<comment type="subunit">
    <text evidence="4">Interacts with anxa5.</text>
</comment>
<comment type="subcellular location">
    <subcellularLocation>
        <location evidence="4">Cytoplasm</location>
        <location evidence="4">Cytosol</location>
    </subcellularLocation>
</comment>
<comment type="tissue specificity">
    <text evidence="4">Ubiquitous.</text>
</comment>
<comment type="developmental stage">
    <text evidence="4">Expression starts early during embryogenesis and is maintained through late embryogenesis and in the adult.</text>
</comment>
<feature type="chain" id="PRO_0000055974" description="E3 ubiquitin-protein ligase MYLIP-A">
    <location>
        <begin position="1"/>
        <end position="472"/>
    </location>
</feature>
<feature type="domain" description="FERM" evidence="2">
    <location>
        <begin position="1"/>
        <end position="279"/>
    </location>
</feature>
<feature type="zinc finger region" description="RING-type" evidence="3">
    <location>
        <begin position="384"/>
        <end position="419"/>
    </location>
</feature>
<feature type="sequence conflict" description="In Ref. 4; AAH65679." evidence="6" ref="4">
    <original>V</original>
    <variation>L</variation>
    <location>
        <position position="12"/>
    </location>
</feature>
<feature type="sequence conflict" description="In Ref. 1; AAQ98868." evidence="6" ref="1">
    <original>S</original>
    <variation>N</variation>
    <location>
        <position position="120"/>
    </location>
</feature>
<feature type="sequence conflict" description="In Ref. 1; AAQ98868." evidence="6" ref="1">
    <original>A</original>
    <variation>P</variation>
    <location>
        <position position="326"/>
    </location>
</feature>
<feature type="sequence conflict" description="In Ref. 2; AAQ97996 and 4; AAH65679." evidence="6" ref="2 4">
    <original>S</original>
    <variation>A</variation>
    <location>
        <position position="340"/>
    </location>
</feature>
<feature type="sequence conflict" description="In Ref. 4; AAH65679." evidence="6" ref="4">
    <original>E</original>
    <variation>D</variation>
    <location>
        <position position="443"/>
    </location>
</feature>
<evidence type="ECO:0000250" key="1"/>
<evidence type="ECO:0000255" key="2">
    <source>
        <dbReference type="PROSITE-ProRule" id="PRU00084"/>
    </source>
</evidence>
<evidence type="ECO:0000255" key="3">
    <source>
        <dbReference type="PROSITE-ProRule" id="PRU00175"/>
    </source>
</evidence>
<evidence type="ECO:0000269" key="4">
    <source>
    </source>
</evidence>
<evidence type="ECO:0000269" key="5">
    <source>
    </source>
</evidence>
<evidence type="ECO:0000305" key="6"/>
<name>MYLIA_DANRE</name>
<protein>
    <recommendedName>
        <fullName>E3 ubiquitin-protein ligase MYLIP-A</fullName>
        <ecNumber>2.3.2.27</ecNumber>
    </recommendedName>
    <alternativeName>
        <fullName>Myosin regulatory light chain-interacting protein A</fullName>
        <shortName>MIR-A</shortName>
    </alternativeName>
    <alternativeName>
        <fullName evidence="6">RING-type E3 ubiquitin transferase MYLIP-A</fullName>
    </alternativeName>
</protein>
<keyword id="KW-0963">Cytoplasm</keyword>
<keyword id="KW-0217">Developmental protein</keyword>
<keyword id="KW-0306">Gastrulation</keyword>
<keyword id="KW-0479">Metal-binding</keyword>
<keyword id="KW-1185">Reference proteome</keyword>
<keyword id="KW-0808">Transferase</keyword>
<keyword id="KW-0833">Ubl conjugation pathway</keyword>
<keyword id="KW-0862">Zinc</keyword>
<keyword id="KW-0863">Zinc-finger</keyword>
<proteinExistence type="evidence at protein level"/>
<gene>
    <name type="primary">mylipa</name>
    <name type="synonym">mir</name>
    <name type="synonym">mylip</name>
    <name type="ORF">si:ch211-266j17.1</name>
</gene>
<organism>
    <name type="scientific">Danio rerio</name>
    <name type="common">Zebrafish</name>
    <name type="synonym">Brachydanio rerio</name>
    <dbReference type="NCBI Taxonomy" id="7955"/>
    <lineage>
        <taxon>Eukaryota</taxon>
        <taxon>Metazoa</taxon>
        <taxon>Chordata</taxon>
        <taxon>Craniata</taxon>
        <taxon>Vertebrata</taxon>
        <taxon>Euteleostomi</taxon>
        <taxon>Actinopterygii</taxon>
        <taxon>Neopterygii</taxon>
        <taxon>Teleostei</taxon>
        <taxon>Ostariophysi</taxon>
        <taxon>Cypriniformes</taxon>
        <taxon>Danionidae</taxon>
        <taxon>Danioninae</taxon>
        <taxon>Danio</taxon>
    </lineage>
</organism>
<accession>Q6TEM9</accession>
<accession>Q1LUH7</accession>
<accession>Q6P0B8</accession>
<accession>Q6T628</accession>
<accession>Q7ZVI9</accession>
<sequence length="472" mass="53434">MLCHVTRPDAVVMEIEVDAKANGEDCLNKVCRKLGIIEVDYFGLQFSGSKGENLWLNLRNRISQQMDNLTPCRLRLRVKFFVEPHLILQEQTRHLFFMHVKEDLHRGHLRMCSEQAQELSALLAQAEFGDYNQNTAKYWYTELCGSEPNQTTINSIIAKHKALEGLSQASVEYQALQLVSSLEHYGVEWHWARDAEAQRLAIGVGPEGIAICRDDFSLVNRISYPIIQIATQSGKSVYLTVTKESSDSVVLLFKLISNRAASGLYRAITETHAFYRCDTVTNAVMMQYSRDFKGHLASLFLNENINLGKKYVFDIRRTSKEVYDYARRALYNAGIVDMMSRPGERTPSNRSPSREQEGALDCGGCQQSRLLQEKLQKLREALLCMLCCEEEIDAAFCPCGHMVCCQNCAAQLQSCPVCRSEVEHVQHVYLPTCTSLLNLTIGENSPEPIHRGMAAHTCTTNDYSTSEKIYQN</sequence>
<reference key="1">
    <citation type="journal article" date="2003" name="Dev. Biol.">
        <title>The zebrafish band 4.1 member Mir is involved in cell movements associated with gastrulation.</title>
        <authorList>
            <person name="Knowlton M.N."/>
            <person name="Chan B.M.C."/>
            <person name="Kelly G.M."/>
        </authorList>
    </citation>
    <scope>NUCLEOTIDE SEQUENCE [MRNA]</scope>
    <scope>FUNCTION</scope>
    <scope>INTERACTION WITH ANXA5</scope>
    <scope>SUBCELLULAR LOCATION</scope>
    <scope>TISSUE SPECIFICITY</scope>
    <scope>DEVELOPMENTAL STAGE</scope>
</reference>
<reference key="2">
    <citation type="journal article" date="2004" name="Proc. Natl. Acad. Sci. U.S.A.">
        <title>Hematopoietic gene expression profile in zebrafish kidney marrow.</title>
        <authorList>
            <person name="Song H.-D."/>
            <person name="Sun X.-J."/>
            <person name="Deng M."/>
            <person name="Zhang G.-W."/>
            <person name="Zhou Y."/>
            <person name="Wu X.-Y."/>
            <person name="Sheng Y."/>
            <person name="Chen Y."/>
            <person name="Ruan Z."/>
            <person name="Jiang C.-L."/>
            <person name="Fan H.-Y."/>
            <person name="Zon L.I."/>
            <person name="Kanki J.P."/>
            <person name="Liu T.X."/>
            <person name="Look A.T."/>
            <person name="Chen Z."/>
        </authorList>
    </citation>
    <scope>NUCLEOTIDE SEQUENCE [LARGE SCALE MRNA]</scope>
    <source>
        <tissue>Kidney marrow</tissue>
    </source>
</reference>
<reference key="3">
    <citation type="journal article" date="2013" name="Nature">
        <title>The zebrafish reference genome sequence and its relationship to the human genome.</title>
        <authorList>
            <person name="Howe K."/>
            <person name="Clark M.D."/>
            <person name="Torroja C.F."/>
            <person name="Torrance J."/>
            <person name="Berthelot C."/>
            <person name="Muffato M."/>
            <person name="Collins J.E."/>
            <person name="Humphray S."/>
            <person name="McLaren K."/>
            <person name="Matthews L."/>
            <person name="McLaren S."/>
            <person name="Sealy I."/>
            <person name="Caccamo M."/>
            <person name="Churcher C."/>
            <person name="Scott C."/>
            <person name="Barrett J.C."/>
            <person name="Koch R."/>
            <person name="Rauch G.J."/>
            <person name="White S."/>
            <person name="Chow W."/>
            <person name="Kilian B."/>
            <person name="Quintais L.T."/>
            <person name="Guerra-Assuncao J.A."/>
            <person name="Zhou Y."/>
            <person name="Gu Y."/>
            <person name="Yen J."/>
            <person name="Vogel J.H."/>
            <person name="Eyre T."/>
            <person name="Redmond S."/>
            <person name="Banerjee R."/>
            <person name="Chi J."/>
            <person name="Fu B."/>
            <person name="Langley E."/>
            <person name="Maguire S.F."/>
            <person name="Laird G.K."/>
            <person name="Lloyd D."/>
            <person name="Kenyon E."/>
            <person name="Donaldson S."/>
            <person name="Sehra H."/>
            <person name="Almeida-King J."/>
            <person name="Loveland J."/>
            <person name="Trevanion S."/>
            <person name="Jones M."/>
            <person name="Quail M."/>
            <person name="Willey D."/>
            <person name="Hunt A."/>
            <person name="Burton J."/>
            <person name="Sims S."/>
            <person name="McLay K."/>
            <person name="Plumb B."/>
            <person name="Davis J."/>
            <person name="Clee C."/>
            <person name="Oliver K."/>
            <person name="Clark R."/>
            <person name="Riddle C."/>
            <person name="Elliot D."/>
            <person name="Threadgold G."/>
            <person name="Harden G."/>
            <person name="Ware D."/>
            <person name="Begum S."/>
            <person name="Mortimore B."/>
            <person name="Kerry G."/>
            <person name="Heath P."/>
            <person name="Phillimore B."/>
            <person name="Tracey A."/>
            <person name="Corby N."/>
            <person name="Dunn M."/>
            <person name="Johnson C."/>
            <person name="Wood J."/>
            <person name="Clark S."/>
            <person name="Pelan S."/>
            <person name="Griffiths G."/>
            <person name="Smith M."/>
            <person name="Glithero R."/>
            <person name="Howden P."/>
            <person name="Barker N."/>
            <person name="Lloyd C."/>
            <person name="Stevens C."/>
            <person name="Harley J."/>
            <person name="Holt K."/>
            <person name="Panagiotidis G."/>
            <person name="Lovell J."/>
            <person name="Beasley H."/>
            <person name="Henderson C."/>
            <person name="Gordon D."/>
            <person name="Auger K."/>
            <person name="Wright D."/>
            <person name="Collins J."/>
            <person name="Raisen C."/>
            <person name="Dyer L."/>
            <person name="Leung K."/>
            <person name="Robertson L."/>
            <person name="Ambridge K."/>
            <person name="Leongamornlert D."/>
            <person name="McGuire S."/>
            <person name="Gilderthorp R."/>
            <person name="Griffiths C."/>
            <person name="Manthravadi D."/>
            <person name="Nichol S."/>
            <person name="Barker G."/>
            <person name="Whitehead S."/>
            <person name="Kay M."/>
            <person name="Brown J."/>
            <person name="Murnane C."/>
            <person name="Gray E."/>
            <person name="Humphries M."/>
            <person name="Sycamore N."/>
            <person name="Barker D."/>
            <person name="Saunders D."/>
            <person name="Wallis J."/>
            <person name="Babbage A."/>
            <person name="Hammond S."/>
            <person name="Mashreghi-Mohammadi M."/>
            <person name="Barr L."/>
            <person name="Martin S."/>
            <person name="Wray P."/>
            <person name="Ellington A."/>
            <person name="Matthews N."/>
            <person name="Ellwood M."/>
            <person name="Woodmansey R."/>
            <person name="Clark G."/>
            <person name="Cooper J."/>
            <person name="Tromans A."/>
            <person name="Grafham D."/>
            <person name="Skuce C."/>
            <person name="Pandian R."/>
            <person name="Andrews R."/>
            <person name="Harrison E."/>
            <person name="Kimberley A."/>
            <person name="Garnett J."/>
            <person name="Fosker N."/>
            <person name="Hall R."/>
            <person name="Garner P."/>
            <person name="Kelly D."/>
            <person name="Bird C."/>
            <person name="Palmer S."/>
            <person name="Gehring I."/>
            <person name="Berger A."/>
            <person name="Dooley C.M."/>
            <person name="Ersan-Urun Z."/>
            <person name="Eser C."/>
            <person name="Geiger H."/>
            <person name="Geisler M."/>
            <person name="Karotki L."/>
            <person name="Kirn A."/>
            <person name="Konantz J."/>
            <person name="Konantz M."/>
            <person name="Oberlander M."/>
            <person name="Rudolph-Geiger S."/>
            <person name="Teucke M."/>
            <person name="Lanz C."/>
            <person name="Raddatz G."/>
            <person name="Osoegawa K."/>
            <person name="Zhu B."/>
            <person name="Rapp A."/>
            <person name="Widaa S."/>
            <person name="Langford C."/>
            <person name="Yang F."/>
            <person name="Schuster S.C."/>
            <person name="Carter N.P."/>
            <person name="Harrow J."/>
            <person name="Ning Z."/>
            <person name="Herrero J."/>
            <person name="Searle S.M."/>
            <person name="Enright A."/>
            <person name="Geisler R."/>
            <person name="Plasterk R.H."/>
            <person name="Lee C."/>
            <person name="Westerfield M."/>
            <person name="de Jong P.J."/>
            <person name="Zon L.I."/>
            <person name="Postlethwait J.H."/>
            <person name="Nusslein-Volhard C."/>
            <person name="Hubbard T.J."/>
            <person name="Roest Crollius H."/>
            <person name="Rogers J."/>
            <person name="Stemple D.L."/>
        </authorList>
    </citation>
    <scope>NUCLEOTIDE SEQUENCE [LARGE SCALE GENOMIC DNA]</scope>
    <source>
        <strain>Tuebingen</strain>
    </source>
</reference>
<reference key="4">
    <citation type="submission" date="2003-01" db="EMBL/GenBank/DDBJ databases">
        <authorList>
            <consortium name="NIH - Zebrafish Gene Collection (ZGC) project"/>
        </authorList>
    </citation>
    <scope>NUCLEOTIDE SEQUENCE [LARGE SCALE MRNA]</scope>
    <source>
        <tissue>Kidney</tissue>
    </source>
</reference>
<reference key="5">
    <citation type="journal article" date="2004" name="Zebrafish">
        <title>Zebrafish Mir antagonizes Frizzled 7-induced gastrulation defects.</title>
        <authorList>
            <person name="Knowlton M.N."/>
            <person name="Kelly G.M."/>
        </authorList>
    </citation>
    <scope>FUNCTION</scope>
</reference>
<dbReference type="EC" id="2.3.2.27"/>
<dbReference type="EMBL" id="AY434450">
    <property type="protein sequence ID" value="AAQ98868.1"/>
    <property type="molecule type" value="mRNA"/>
</dbReference>
<dbReference type="EMBL" id="AY423020">
    <property type="protein sequence ID" value="AAQ97996.1"/>
    <property type="molecule type" value="mRNA"/>
</dbReference>
<dbReference type="EMBL" id="BX936330">
    <property type="protein sequence ID" value="CAK04866.1"/>
    <property type="molecule type" value="Genomic_DNA"/>
</dbReference>
<dbReference type="EMBL" id="BC065679">
    <property type="protein sequence ID" value="AAH65679.1"/>
    <property type="molecule type" value="mRNA"/>
</dbReference>
<dbReference type="RefSeq" id="NP_956277.2">
    <property type="nucleotide sequence ID" value="NM_199983.2"/>
</dbReference>
<dbReference type="SMR" id="Q6TEM9"/>
<dbReference type="FunCoup" id="Q6TEM9">
    <property type="interactions" value="1197"/>
</dbReference>
<dbReference type="STRING" id="7955.ENSDARP00000012386"/>
<dbReference type="PaxDb" id="7955-ENSDARP00000012386"/>
<dbReference type="DNASU" id="335888"/>
<dbReference type="Ensembl" id="ENSDART00000013497">
    <property type="protein sequence ID" value="ENSDARP00000012386"/>
    <property type="gene ID" value="ENSDARG00000008859"/>
</dbReference>
<dbReference type="GeneID" id="335888"/>
<dbReference type="KEGG" id="dre:335888"/>
<dbReference type="AGR" id="ZFIN:ZDB-GENE-030131-7831"/>
<dbReference type="CTD" id="335888"/>
<dbReference type="ZFIN" id="ZDB-GENE-030131-7831">
    <property type="gene designation" value="mylipa"/>
</dbReference>
<dbReference type="eggNOG" id="ENOG502QV76">
    <property type="taxonomic scope" value="Eukaryota"/>
</dbReference>
<dbReference type="HOGENOM" id="CLU_031820_1_0_1"/>
<dbReference type="InParanoid" id="Q6TEM9"/>
<dbReference type="OMA" id="NKGENLW"/>
<dbReference type="OrthoDB" id="10037309at2759"/>
<dbReference type="PhylomeDB" id="Q6TEM9"/>
<dbReference type="TreeFam" id="TF351936"/>
<dbReference type="Reactome" id="R-DRE-983168">
    <property type="pathway name" value="Antigen processing: Ubiquitination &amp; Proteasome degradation"/>
</dbReference>
<dbReference type="UniPathway" id="UPA00143"/>
<dbReference type="PRO" id="PR:Q6TEM9"/>
<dbReference type="Proteomes" id="UP000000437">
    <property type="component" value="Chromosome 19"/>
</dbReference>
<dbReference type="Bgee" id="ENSDARG00000008859">
    <property type="expression patterns" value="Expressed in cleaving embryo and 30 other cell types or tissues"/>
</dbReference>
<dbReference type="GO" id="GO:0005737">
    <property type="term" value="C:cytoplasm"/>
    <property type="evidence" value="ECO:0000314"/>
    <property type="project" value="ZFIN"/>
</dbReference>
<dbReference type="GO" id="GO:0005856">
    <property type="term" value="C:cytoskeleton"/>
    <property type="evidence" value="ECO:0007669"/>
    <property type="project" value="InterPro"/>
</dbReference>
<dbReference type="GO" id="GO:0005829">
    <property type="term" value="C:cytosol"/>
    <property type="evidence" value="ECO:0007669"/>
    <property type="project" value="UniProtKB-SubCell"/>
</dbReference>
<dbReference type="GO" id="GO:0004842">
    <property type="term" value="F:ubiquitin-protein transferase activity"/>
    <property type="evidence" value="ECO:0000318"/>
    <property type="project" value="GO_Central"/>
</dbReference>
<dbReference type="GO" id="GO:0008270">
    <property type="term" value="F:zinc ion binding"/>
    <property type="evidence" value="ECO:0007669"/>
    <property type="project" value="UniProtKB-KW"/>
</dbReference>
<dbReference type="GO" id="GO:0007369">
    <property type="term" value="P:gastrulation"/>
    <property type="evidence" value="ECO:0000315"/>
    <property type="project" value="UniProtKB"/>
</dbReference>
<dbReference type="GO" id="GO:0030178">
    <property type="term" value="P:negative regulation of Wnt signaling pathway"/>
    <property type="evidence" value="ECO:0000316"/>
    <property type="project" value="UniProtKB"/>
</dbReference>
<dbReference type="GO" id="GO:0016567">
    <property type="term" value="P:protein ubiquitination"/>
    <property type="evidence" value="ECO:0007669"/>
    <property type="project" value="UniProtKB-UniPathway"/>
</dbReference>
<dbReference type="GO" id="GO:0006511">
    <property type="term" value="P:ubiquitin-dependent protein catabolic process"/>
    <property type="evidence" value="ECO:0000318"/>
    <property type="project" value="GO_Central"/>
</dbReference>
<dbReference type="CDD" id="cd14473">
    <property type="entry name" value="FERM_B-lobe"/>
    <property type="match status" value="1"/>
</dbReference>
<dbReference type="CDD" id="cd13195">
    <property type="entry name" value="FERM_C_MYLIP_IDOL"/>
    <property type="match status" value="1"/>
</dbReference>
<dbReference type="CDD" id="cd17104">
    <property type="entry name" value="FERM_F1_MYLIP"/>
    <property type="match status" value="1"/>
</dbReference>
<dbReference type="CDD" id="cd16523">
    <property type="entry name" value="RING-HC_MYLIP"/>
    <property type="match status" value="1"/>
</dbReference>
<dbReference type="FunFam" id="1.10.1170.10:FF:000002">
    <property type="entry name" value="Baculoviral IAP repeat containing 7"/>
    <property type="match status" value="1"/>
</dbReference>
<dbReference type="FunFam" id="1.20.80.10:FF:000019">
    <property type="entry name" value="E3 ubiquitin-protein ligase MYLIP"/>
    <property type="match status" value="1"/>
</dbReference>
<dbReference type="FunFam" id="3.10.20.90:FF:000129">
    <property type="entry name" value="E3 ubiquitin-protein ligase MYLIP isoform X1"/>
    <property type="match status" value="1"/>
</dbReference>
<dbReference type="FunFam" id="2.30.29.30:FF:000164">
    <property type="entry name" value="Putative E3 ubiquitin-protein ligase MYLIP"/>
    <property type="match status" value="1"/>
</dbReference>
<dbReference type="FunFam" id="3.30.40.10:FF:000175">
    <property type="entry name" value="Putative E3 ubiquitin-protein ligase MYLIP"/>
    <property type="match status" value="1"/>
</dbReference>
<dbReference type="Gene3D" id="1.20.80.10">
    <property type="match status" value="1"/>
</dbReference>
<dbReference type="Gene3D" id="3.10.20.90">
    <property type="entry name" value="Phosphatidylinositol 3-kinase Catalytic Subunit, Chain A, domain 1"/>
    <property type="match status" value="1"/>
</dbReference>
<dbReference type="Gene3D" id="2.30.29.30">
    <property type="entry name" value="Pleckstrin-homology domain (PH domain)/Phosphotyrosine-binding domain (PTB)"/>
    <property type="match status" value="1"/>
</dbReference>
<dbReference type="Gene3D" id="3.30.40.10">
    <property type="entry name" value="Zinc/RING finger domain, C3HC4 (zinc finger)"/>
    <property type="match status" value="1"/>
</dbReference>
<dbReference type="InterPro" id="IPR019749">
    <property type="entry name" value="Band_41_domain"/>
</dbReference>
<dbReference type="InterPro" id="IPR014352">
    <property type="entry name" value="FERM/acyl-CoA-bd_prot_sf"/>
</dbReference>
<dbReference type="InterPro" id="IPR035963">
    <property type="entry name" value="FERM_2"/>
</dbReference>
<dbReference type="InterPro" id="IPR019748">
    <property type="entry name" value="FERM_central"/>
</dbReference>
<dbReference type="InterPro" id="IPR000299">
    <property type="entry name" value="FERM_domain"/>
</dbReference>
<dbReference type="InterPro" id="IPR018979">
    <property type="entry name" value="FERM_N"/>
</dbReference>
<dbReference type="InterPro" id="IPR018980">
    <property type="entry name" value="FERM_PH-like_C"/>
</dbReference>
<dbReference type="InterPro" id="IPR041790">
    <property type="entry name" value="MYLIP_FERM_C"/>
</dbReference>
<dbReference type="InterPro" id="IPR011993">
    <property type="entry name" value="PH-like_dom_sf"/>
</dbReference>
<dbReference type="InterPro" id="IPR029071">
    <property type="entry name" value="Ubiquitin-like_domsf"/>
</dbReference>
<dbReference type="InterPro" id="IPR001841">
    <property type="entry name" value="Znf_RING"/>
</dbReference>
<dbReference type="InterPro" id="IPR013083">
    <property type="entry name" value="Znf_RING/FYVE/PHD"/>
</dbReference>
<dbReference type="PANTHER" id="PTHR23280">
    <property type="entry name" value="4.1 G PROTEIN"/>
    <property type="match status" value="1"/>
</dbReference>
<dbReference type="PANTHER" id="PTHR23280:SF13">
    <property type="entry name" value="E3 UBIQUITIN-PROTEIN LIGASE MYLIP"/>
    <property type="match status" value="1"/>
</dbReference>
<dbReference type="Pfam" id="PF09380">
    <property type="entry name" value="FERM_C"/>
    <property type="match status" value="1"/>
</dbReference>
<dbReference type="Pfam" id="PF00373">
    <property type="entry name" value="FERM_M"/>
    <property type="match status" value="1"/>
</dbReference>
<dbReference type="Pfam" id="PF09379">
    <property type="entry name" value="FERM_N"/>
    <property type="match status" value="1"/>
</dbReference>
<dbReference type="Pfam" id="PF13920">
    <property type="entry name" value="zf-C3HC4_3"/>
    <property type="match status" value="1"/>
</dbReference>
<dbReference type="PRINTS" id="PR00935">
    <property type="entry name" value="BAND41"/>
</dbReference>
<dbReference type="SMART" id="SM00295">
    <property type="entry name" value="B41"/>
    <property type="match status" value="1"/>
</dbReference>
<dbReference type="SMART" id="SM01196">
    <property type="entry name" value="FERM_C"/>
    <property type="match status" value="1"/>
</dbReference>
<dbReference type="SUPFAM" id="SSF50729">
    <property type="entry name" value="PH domain-like"/>
    <property type="match status" value="1"/>
</dbReference>
<dbReference type="SUPFAM" id="SSF57850">
    <property type="entry name" value="RING/U-box"/>
    <property type="match status" value="1"/>
</dbReference>
<dbReference type="SUPFAM" id="SSF47031">
    <property type="entry name" value="Second domain of FERM"/>
    <property type="match status" value="1"/>
</dbReference>
<dbReference type="SUPFAM" id="SSF54236">
    <property type="entry name" value="Ubiquitin-like"/>
    <property type="match status" value="1"/>
</dbReference>
<dbReference type="PROSITE" id="PS50057">
    <property type="entry name" value="FERM_3"/>
    <property type="match status" value="1"/>
</dbReference>
<dbReference type="PROSITE" id="PS50089">
    <property type="entry name" value="ZF_RING_2"/>
    <property type="match status" value="1"/>
</dbReference>